<organism>
    <name type="scientific">Oryza sativa subsp. indica</name>
    <name type="common">Rice</name>
    <dbReference type="NCBI Taxonomy" id="39946"/>
    <lineage>
        <taxon>Eukaryota</taxon>
        <taxon>Viridiplantae</taxon>
        <taxon>Streptophyta</taxon>
        <taxon>Embryophyta</taxon>
        <taxon>Tracheophyta</taxon>
        <taxon>Spermatophyta</taxon>
        <taxon>Magnoliopsida</taxon>
        <taxon>Liliopsida</taxon>
        <taxon>Poales</taxon>
        <taxon>Poaceae</taxon>
        <taxon>BOP clade</taxon>
        <taxon>Oryzoideae</taxon>
        <taxon>Oryzeae</taxon>
        <taxon>Oryzinae</taxon>
        <taxon>Oryza</taxon>
        <taxon>Oryza sativa</taxon>
    </lineage>
</organism>
<gene>
    <name type="primary">H2B.2</name>
    <name type="ORF">OsI_028676</name>
</gene>
<proteinExistence type="inferred from homology"/>
<sequence length="150" mass="16334">MAPKAEKKPAEKKPAEEKAGEKAPAAGKKPKAEKRLPASKGEKGGEGKKERGRKKAKKSVETYKIYIFKVLKQVHPDIGISSKAMSIMNSFINDIFEKLAGEAAKLARYNKKPTITSREIQTSVRLVLPGELAKHAVSEGTKAVTKFTSS</sequence>
<reference key="1">
    <citation type="journal article" date="2005" name="PLoS Biol.">
        <title>The genomes of Oryza sativa: a history of duplications.</title>
        <authorList>
            <person name="Yu J."/>
            <person name="Wang J."/>
            <person name="Lin W."/>
            <person name="Li S."/>
            <person name="Li H."/>
            <person name="Zhou J."/>
            <person name="Ni P."/>
            <person name="Dong W."/>
            <person name="Hu S."/>
            <person name="Zeng C."/>
            <person name="Zhang J."/>
            <person name="Zhang Y."/>
            <person name="Li R."/>
            <person name="Xu Z."/>
            <person name="Li S."/>
            <person name="Li X."/>
            <person name="Zheng H."/>
            <person name="Cong L."/>
            <person name="Lin L."/>
            <person name="Yin J."/>
            <person name="Geng J."/>
            <person name="Li G."/>
            <person name="Shi J."/>
            <person name="Liu J."/>
            <person name="Lv H."/>
            <person name="Li J."/>
            <person name="Wang J."/>
            <person name="Deng Y."/>
            <person name="Ran L."/>
            <person name="Shi X."/>
            <person name="Wang X."/>
            <person name="Wu Q."/>
            <person name="Li C."/>
            <person name="Ren X."/>
            <person name="Wang J."/>
            <person name="Wang X."/>
            <person name="Li D."/>
            <person name="Liu D."/>
            <person name="Zhang X."/>
            <person name="Ji Z."/>
            <person name="Zhao W."/>
            <person name="Sun Y."/>
            <person name="Zhang Z."/>
            <person name="Bao J."/>
            <person name="Han Y."/>
            <person name="Dong L."/>
            <person name="Ji J."/>
            <person name="Chen P."/>
            <person name="Wu S."/>
            <person name="Liu J."/>
            <person name="Xiao Y."/>
            <person name="Bu D."/>
            <person name="Tan J."/>
            <person name="Yang L."/>
            <person name="Ye C."/>
            <person name="Zhang J."/>
            <person name="Xu J."/>
            <person name="Zhou Y."/>
            <person name="Yu Y."/>
            <person name="Zhang B."/>
            <person name="Zhuang S."/>
            <person name="Wei H."/>
            <person name="Liu B."/>
            <person name="Lei M."/>
            <person name="Yu H."/>
            <person name="Li Y."/>
            <person name="Xu H."/>
            <person name="Wei S."/>
            <person name="He X."/>
            <person name="Fang L."/>
            <person name="Zhang Z."/>
            <person name="Zhang Y."/>
            <person name="Huang X."/>
            <person name="Su Z."/>
            <person name="Tong W."/>
            <person name="Li J."/>
            <person name="Tong Z."/>
            <person name="Li S."/>
            <person name="Ye J."/>
            <person name="Wang L."/>
            <person name="Fang L."/>
            <person name="Lei T."/>
            <person name="Chen C.-S."/>
            <person name="Chen H.-C."/>
            <person name="Xu Z."/>
            <person name="Li H."/>
            <person name="Huang H."/>
            <person name="Zhang F."/>
            <person name="Xu H."/>
            <person name="Li N."/>
            <person name="Zhao C."/>
            <person name="Li S."/>
            <person name="Dong L."/>
            <person name="Huang Y."/>
            <person name="Li L."/>
            <person name="Xi Y."/>
            <person name="Qi Q."/>
            <person name="Li W."/>
            <person name="Zhang B."/>
            <person name="Hu W."/>
            <person name="Zhang Y."/>
            <person name="Tian X."/>
            <person name="Jiao Y."/>
            <person name="Liang X."/>
            <person name="Jin J."/>
            <person name="Gao L."/>
            <person name="Zheng W."/>
            <person name="Hao B."/>
            <person name="Liu S.-M."/>
            <person name="Wang W."/>
            <person name="Yuan L."/>
            <person name="Cao M."/>
            <person name="McDermott J."/>
            <person name="Samudrala R."/>
            <person name="Wang J."/>
            <person name="Wong G.K.-S."/>
            <person name="Yang H."/>
        </authorList>
    </citation>
    <scope>NUCLEOTIDE SEQUENCE [LARGE SCALE GENOMIC DNA]</scope>
    <source>
        <strain>cv. 93-11</strain>
    </source>
</reference>
<protein>
    <recommendedName>
        <fullName>Histone H2B.2</fullName>
    </recommendedName>
</protein>
<accession>A2YWI3</accession>
<name>H2B2_ORYSI</name>
<keyword id="KW-0007">Acetylation</keyword>
<keyword id="KW-0158">Chromosome</keyword>
<keyword id="KW-0238">DNA-binding</keyword>
<keyword id="KW-1017">Isopeptide bond</keyword>
<keyword id="KW-0544">Nucleosome core</keyword>
<keyword id="KW-0539">Nucleus</keyword>
<keyword id="KW-1185">Reference proteome</keyword>
<keyword id="KW-0832">Ubl conjugation</keyword>
<comment type="function">
    <text>Core component of nucleosome. Nucleosomes wrap and compact DNA into chromatin, limiting DNA accessibility to the cellular machineries which require DNA as a template. Histones thereby play a central role in transcription regulation, DNA repair, DNA replication and chromosomal stability. DNA accessibility is regulated via a complex set of post-translational modifications of histones, also called histone code, and nucleosome remodeling.</text>
</comment>
<comment type="subunit">
    <text>The nucleosome is a histone octamer containing two molecules each of H2A, H2B, H3 and H4 assembled in one H3-H4 heterotetramer and two H2A-H2B heterodimers. The octamer wraps approximately 147 bp of DNA.</text>
</comment>
<comment type="subcellular location">
    <subcellularLocation>
        <location evidence="1">Nucleus</location>
    </subcellularLocation>
    <subcellularLocation>
        <location evidence="1">Chromosome</location>
    </subcellularLocation>
</comment>
<comment type="PTM">
    <text evidence="1">Can be acetylated to form H2BK6ac and H2BK33ac.</text>
</comment>
<comment type="PTM">
    <text evidence="1">Monoubiquitinated by BRE1 to form H2BK143ub1 and deubiquitinated by UBP26. Required for heterochromatic histone H3 di- and trimethylation at H3K4me. May give a specific tag for epigenetic transcriptional activation (By similarity).</text>
</comment>
<comment type="similarity">
    <text evidence="3">Belongs to the histone H2B family.</text>
</comment>
<comment type="caution">
    <text evidence="3">To ensure consistency between histone entries, we follow the 'Brno' nomenclature for histone modifications, with positions referring to those used in the literature for the 'closest' model organism. Due to slight variations in histone sequences between organisms and to the presence of initiator methionine in UniProtKB/Swiss-Prot sequences, the actual positions of modified amino acids in the sequence generally differ. In this entry the following conventions are used: H2BK6ac = acetylated Lys-7; H2BK33ac = acetylated Lys-34; H2BK143ub1 = monoubiquitinated Lys-146.</text>
</comment>
<feature type="initiator methionine" description="Removed" evidence="1">
    <location>
        <position position="1"/>
    </location>
</feature>
<feature type="chain" id="PRO_0000294178" description="Histone H2B.2">
    <location>
        <begin position="2"/>
        <end position="150"/>
    </location>
</feature>
<feature type="region of interest" description="Disordered" evidence="2">
    <location>
        <begin position="1"/>
        <end position="58"/>
    </location>
</feature>
<feature type="compositionally biased region" description="Basic and acidic residues" evidence="2">
    <location>
        <begin position="1"/>
        <end position="21"/>
    </location>
</feature>
<feature type="compositionally biased region" description="Basic and acidic residues" evidence="2">
    <location>
        <begin position="33"/>
        <end position="49"/>
    </location>
</feature>
<feature type="modified residue" description="N6-acetyllysine" evidence="1">
    <location>
        <position position="7"/>
    </location>
</feature>
<feature type="modified residue" description="N6-acetyllysine" evidence="1">
    <location>
        <position position="34"/>
    </location>
</feature>
<feature type="cross-link" description="Glycyl lysine isopeptide (Lys-Gly) (interchain with G-Cter in ubiquitin)" evidence="1">
    <location>
        <position position="146"/>
    </location>
</feature>
<dbReference type="EMBL" id="CM000133">
    <property type="protein sequence ID" value="EAZ07444.1"/>
    <property type="molecule type" value="Genomic_DNA"/>
</dbReference>
<dbReference type="SMR" id="A2YWI3"/>
<dbReference type="STRING" id="39946.A2YWI3"/>
<dbReference type="EnsemblPlants" id="BGIOSGA028894-TA">
    <property type="protein sequence ID" value="BGIOSGA028894-PA"/>
    <property type="gene ID" value="BGIOSGA028894"/>
</dbReference>
<dbReference type="EnsemblPlants" id="OsGoSa_08g0019580.01">
    <property type="protein sequence ID" value="OsGoSa_08g0019580.01"/>
    <property type="gene ID" value="OsGoSa_08g0019580"/>
</dbReference>
<dbReference type="EnsemblPlants" id="OsKYG_08g0019730.01">
    <property type="protein sequence ID" value="OsKYG_08g0019730.01"/>
    <property type="gene ID" value="OsKYG_08g0019730"/>
</dbReference>
<dbReference type="EnsemblPlants" id="OsLaMu_08g0019780.01">
    <property type="protein sequence ID" value="OsLaMu_08g0019780.01"/>
    <property type="gene ID" value="OsLaMu_08g0019780"/>
</dbReference>
<dbReference type="EnsemblPlants" id="OsLima_08g0019460.01">
    <property type="protein sequence ID" value="OsLima_08g0019460.01"/>
    <property type="gene ID" value="OsLima_08g0019460"/>
</dbReference>
<dbReference type="EnsemblPlants" id="OsLiXu_08g0020430.01">
    <property type="protein sequence ID" value="OsLiXu_08g0020430.01"/>
    <property type="gene ID" value="OsLiXu_08g0020430"/>
</dbReference>
<dbReference type="EnsemblPlants" id="OsMH63_08G020320_01">
    <property type="protein sequence ID" value="OsMH63_08G020320_01"/>
    <property type="gene ID" value="OsMH63_08G020320"/>
</dbReference>
<dbReference type="EnsemblPlants" id="OsPr106_08g0020250.01">
    <property type="protein sequence ID" value="OsPr106_08g0020250.01"/>
    <property type="gene ID" value="OsPr106_08g0020250"/>
</dbReference>
<dbReference type="EnsemblPlants" id="OsZS97_08G020160_01">
    <property type="protein sequence ID" value="OsZS97_08G020160_01"/>
    <property type="gene ID" value="OsZS97_08G020160"/>
</dbReference>
<dbReference type="Gramene" id="BGIOSGA028894-TA">
    <property type="protein sequence ID" value="BGIOSGA028894-PA"/>
    <property type="gene ID" value="BGIOSGA028894"/>
</dbReference>
<dbReference type="Gramene" id="OsGoSa_08g0019580.01">
    <property type="protein sequence ID" value="OsGoSa_08g0019580.01"/>
    <property type="gene ID" value="OsGoSa_08g0019580"/>
</dbReference>
<dbReference type="Gramene" id="OsKYG_08g0019730.01">
    <property type="protein sequence ID" value="OsKYG_08g0019730.01"/>
    <property type="gene ID" value="OsKYG_08g0019730"/>
</dbReference>
<dbReference type="Gramene" id="OsLaMu_08g0019780.01">
    <property type="protein sequence ID" value="OsLaMu_08g0019780.01"/>
    <property type="gene ID" value="OsLaMu_08g0019780"/>
</dbReference>
<dbReference type="Gramene" id="OsLima_08g0019460.01">
    <property type="protein sequence ID" value="OsLima_08g0019460.01"/>
    <property type="gene ID" value="OsLima_08g0019460"/>
</dbReference>
<dbReference type="Gramene" id="OsLiXu_08g0020430.01">
    <property type="protein sequence ID" value="OsLiXu_08g0020430.01"/>
    <property type="gene ID" value="OsLiXu_08g0020430"/>
</dbReference>
<dbReference type="Gramene" id="OsMH63_08G020320_01">
    <property type="protein sequence ID" value="OsMH63_08G020320_01"/>
    <property type="gene ID" value="OsMH63_08G020320"/>
</dbReference>
<dbReference type="Gramene" id="OsPr106_08g0020250.01">
    <property type="protein sequence ID" value="OsPr106_08g0020250.01"/>
    <property type="gene ID" value="OsPr106_08g0020250"/>
</dbReference>
<dbReference type="Gramene" id="OsZS97_08G020160_01">
    <property type="protein sequence ID" value="OsZS97_08G020160_01"/>
    <property type="gene ID" value="OsZS97_08G020160"/>
</dbReference>
<dbReference type="HOGENOM" id="CLU_075666_1_0_1"/>
<dbReference type="OMA" id="ANIACNS"/>
<dbReference type="OrthoDB" id="1914959at2759"/>
<dbReference type="Proteomes" id="UP000007015">
    <property type="component" value="Chromosome 8"/>
</dbReference>
<dbReference type="GO" id="GO:0000786">
    <property type="term" value="C:nucleosome"/>
    <property type="evidence" value="ECO:0007669"/>
    <property type="project" value="UniProtKB-KW"/>
</dbReference>
<dbReference type="GO" id="GO:0005634">
    <property type="term" value="C:nucleus"/>
    <property type="evidence" value="ECO:0007669"/>
    <property type="project" value="UniProtKB-SubCell"/>
</dbReference>
<dbReference type="GO" id="GO:0003677">
    <property type="term" value="F:DNA binding"/>
    <property type="evidence" value="ECO:0007669"/>
    <property type="project" value="UniProtKB-KW"/>
</dbReference>
<dbReference type="GO" id="GO:0046982">
    <property type="term" value="F:protein heterodimerization activity"/>
    <property type="evidence" value="ECO:0007669"/>
    <property type="project" value="InterPro"/>
</dbReference>
<dbReference type="GO" id="GO:0030527">
    <property type="term" value="F:structural constituent of chromatin"/>
    <property type="evidence" value="ECO:0007669"/>
    <property type="project" value="InterPro"/>
</dbReference>
<dbReference type="CDD" id="cd22910">
    <property type="entry name" value="HFD_H2B"/>
    <property type="match status" value="1"/>
</dbReference>
<dbReference type="FunFam" id="1.10.20.10:FF:000014">
    <property type="entry name" value="Histone H2B"/>
    <property type="match status" value="1"/>
</dbReference>
<dbReference type="Gene3D" id="1.10.20.10">
    <property type="entry name" value="Histone, subunit A"/>
    <property type="match status" value="1"/>
</dbReference>
<dbReference type="InterPro" id="IPR009072">
    <property type="entry name" value="Histone-fold"/>
</dbReference>
<dbReference type="InterPro" id="IPR007125">
    <property type="entry name" value="Histone_H2A/H2B/H3"/>
</dbReference>
<dbReference type="InterPro" id="IPR000558">
    <property type="entry name" value="Histone_H2B"/>
</dbReference>
<dbReference type="InterPro" id="IPR055333">
    <property type="entry name" value="HISTONE_H2B_site"/>
</dbReference>
<dbReference type="PANTHER" id="PTHR23428">
    <property type="entry name" value="HISTONE H2B"/>
    <property type="match status" value="1"/>
</dbReference>
<dbReference type="Pfam" id="PF00125">
    <property type="entry name" value="Histone"/>
    <property type="match status" value="1"/>
</dbReference>
<dbReference type="PRINTS" id="PR00621">
    <property type="entry name" value="HISTONEH2B"/>
</dbReference>
<dbReference type="SMART" id="SM00427">
    <property type="entry name" value="H2B"/>
    <property type="match status" value="1"/>
</dbReference>
<dbReference type="SUPFAM" id="SSF47113">
    <property type="entry name" value="Histone-fold"/>
    <property type="match status" value="1"/>
</dbReference>
<dbReference type="PROSITE" id="PS00357">
    <property type="entry name" value="HISTONE_H2B"/>
    <property type="match status" value="1"/>
</dbReference>
<evidence type="ECO:0000250" key="1"/>
<evidence type="ECO:0000256" key="2">
    <source>
        <dbReference type="SAM" id="MobiDB-lite"/>
    </source>
</evidence>
<evidence type="ECO:0000305" key="3"/>